<comment type="subcellular location">
    <subcellularLocation>
        <location evidence="2">Cell membrane</location>
        <topology evidence="2">Multi-pass membrane protein</topology>
    </subcellularLocation>
</comment>
<name>Y396_MYCPN</name>
<proteinExistence type="predicted"/>
<gene>
    <name type="ordered locus">MPN_396</name>
    <name type="ORF">F11_orf887</name>
    <name type="ORF">MP442</name>
</gene>
<feature type="chain" id="PRO_0000210503" description="Uncharacterized protein MG277 homolog">
    <location>
        <begin position="1"/>
        <end position="971"/>
    </location>
</feature>
<feature type="transmembrane region" description="Helical" evidence="1">
    <location>
        <begin position="11"/>
        <end position="31"/>
    </location>
</feature>
<feature type="transmembrane region" description="Helical" evidence="1">
    <location>
        <begin position="516"/>
        <end position="536"/>
    </location>
</feature>
<feature type="transmembrane region" description="Helical" evidence="1">
    <location>
        <begin position="547"/>
        <end position="567"/>
    </location>
</feature>
<feature type="transmembrane region" description="Helical" evidence="1">
    <location>
        <begin position="569"/>
        <end position="589"/>
    </location>
</feature>
<feature type="transmembrane region" description="Helical" evidence="1">
    <location>
        <begin position="615"/>
        <end position="635"/>
    </location>
</feature>
<feature type="transmembrane region" description="Helical" evidence="1">
    <location>
        <begin position="651"/>
        <end position="671"/>
    </location>
</feature>
<feature type="transmembrane region" description="Helical" evidence="1">
    <location>
        <begin position="727"/>
        <end position="747"/>
    </location>
</feature>
<feature type="transmembrane region" description="Helical" evidence="1">
    <location>
        <begin position="763"/>
        <end position="783"/>
    </location>
</feature>
<feature type="transmembrane region" description="Helical" evidence="1">
    <location>
        <begin position="795"/>
        <end position="815"/>
    </location>
</feature>
<feature type="transmembrane region" description="Helical" evidence="1">
    <location>
        <begin position="817"/>
        <end position="837"/>
    </location>
</feature>
<feature type="transmembrane region" description="Helical" evidence="1">
    <location>
        <begin position="878"/>
        <end position="898"/>
    </location>
</feature>
<feature type="transmembrane region" description="Helical" evidence="1">
    <location>
        <begin position="900"/>
        <end position="920"/>
    </location>
</feature>
<feature type="transmembrane region" description="Helical" evidence="1">
    <location>
        <begin position="923"/>
        <end position="943"/>
    </location>
</feature>
<sequence length="971" mass="108245">MGLKKRVSFDWLLKIGIILVLAFLGLFGIIFGSYKLLNDSRLGVVFNGSTTTTVYFLNHKSKDANKELDPTQKKDGNGSGNNTEMITDVNGFLNNIEKSYANSLYAQGFSSVNITKNSHDTSAKELSDKGVFDSSWLVNDGLPSISVTFEQRREEARTRARKRQIDAQVKRNALSAIEHNYKLSLETTDGIVLFDSFDKEFIRNSLTAVVPQTTNTNSALTFEYKLSKNVITKESLHNDFLDFIKSKSLTDSDYNTGNGQKSVEGSGKWFKDKANGSAQNGNKTLVLWKDKEGAVQYVRNIFNVPKGGTDYLTFNEREKNLWDFLHAEGNFSSGDNLFLQKNNNGNSPITKASDITLKNIYYIYAAPTHFSQVATKDNNNKDAADVVAVANSADTRKLRSGDATGFSGLFSNYILAEIRTEDPVAKNGDPVKVNATLQSFLDSNNQRLEHGGNIKFQVANFVNNDGSYVPASYLEASRVKVLLSNGFPETATIAAANTKLVNAPLSNTLARDVSNFASSFIALGVIILLATIALGIRYKLLGLYKALALALSAISSLAFFSAVGGVVDVFSFVGIFFVVAVNIINLITLAELFLRNIKNNASIVESWKLCLKRSFFTMIETHICWLLSALVVIYLSNYQVQQLGTLMAVSAITSYFLNYGLGVILVWLFVSSHSGLEWRFFLYKKDAQALTKTSSNYSILTENNDIQTDFFISKNQHDFFGKKKWSLLFIWLTVLAFGVVMLGLYLGAPQLLGNFLAADIESSTGIMLGVGVISLLYLLYSLPRYGVAYGISYLIALILLAAGLFGAMYLANFIFRIDQSTIQLIIFVYLFWLFFQARIGQTTIWTYCYWFKRSLKDRVFVKNLFNDNVNSQWRLDLIGSSVLILLFIVYAAFNFGGINGTINLVIFYLIAIVALFSVFVNGLPLFSFGLINGWLSPYNYVQIHITLRHKKQMFKEVDQIEEQLISGINSF</sequence>
<dbReference type="EMBL" id="U00089">
    <property type="protein sequence ID" value="AAG34750.1"/>
    <property type="molecule type" value="Genomic_DNA"/>
</dbReference>
<dbReference type="PIR" id="S73768">
    <property type="entry name" value="S73768"/>
</dbReference>
<dbReference type="RefSeq" id="NP_110084.1">
    <property type="nucleotide sequence ID" value="NC_000912.1"/>
</dbReference>
<dbReference type="RefSeq" id="WP_010874752.1">
    <property type="nucleotide sequence ID" value="NZ_OU342337.1"/>
</dbReference>
<dbReference type="STRING" id="272634.MPN_396"/>
<dbReference type="EnsemblBacteria" id="AAG34750">
    <property type="protein sequence ID" value="AAG34750"/>
    <property type="gene ID" value="MPN_396"/>
</dbReference>
<dbReference type="KEGG" id="mpn:MPN_396"/>
<dbReference type="PATRIC" id="fig|272634.6.peg.427"/>
<dbReference type="HOGENOM" id="CLU_304380_0_0_14"/>
<dbReference type="OrthoDB" id="395055at2"/>
<dbReference type="BioCyc" id="MPNE272634:G1GJ3-629-MONOMER"/>
<dbReference type="Proteomes" id="UP000000808">
    <property type="component" value="Chromosome"/>
</dbReference>
<dbReference type="GO" id="GO:0005886">
    <property type="term" value="C:plasma membrane"/>
    <property type="evidence" value="ECO:0007669"/>
    <property type="project" value="UniProtKB-SubCell"/>
</dbReference>
<dbReference type="NCBIfam" id="NF045752">
    <property type="entry name" value="MPN396"/>
    <property type="match status" value="1"/>
</dbReference>
<dbReference type="SUPFAM" id="SSF82866">
    <property type="entry name" value="Multidrug efflux transporter AcrB transmembrane domain"/>
    <property type="match status" value="1"/>
</dbReference>
<evidence type="ECO:0000255" key="1"/>
<evidence type="ECO:0000305" key="2"/>
<reference key="1">
    <citation type="journal article" date="1996" name="Nucleic Acids Res.">
        <title>Complete sequence analysis of the genome of the bacterium Mycoplasma pneumoniae.</title>
        <authorList>
            <person name="Himmelreich R."/>
            <person name="Hilbert H."/>
            <person name="Plagens H."/>
            <person name="Pirkl E."/>
            <person name="Li B.-C."/>
            <person name="Herrmann R."/>
        </authorList>
    </citation>
    <scope>NUCLEOTIDE SEQUENCE [LARGE SCALE GENOMIC DNA]</scope>
    <source>
        <strain>ATCC 29342 / M129 / Subtype 1</strain>
    </source>
</reference>
<reference key="2">
    <citation type="journal article" date="2000" name="Nucleic Acids Res.">
        <title>Re-annotating the Mycoplasma pneumoniae genome sequence: adding value, function and reading frames.</title>
        <authorList>
            <person name="Dandekar T."/>
            <person name="Huynen M."/>
            <person name="Regula J.T."/>
            <person name="Ueberle B."/>
            <person name="Zimmermann C.U."/>
            <person name="Andrade M.A."/>
            <person name="Doerks T."/>
            <person name="Sanchez-Pulido L."/>
            <person name="Snel B."/>
            <person name="Suyama M."/>
            <person name="Yuan Y.P."/>
            <person name="Herrmann R."/>
            <person name="Bork P."/>
        </authorList>
    </citation>
    <scope>SEQUENCE REVISION</scope>
    <source>
        <strain>ATCC 29342 / M129 / Subtype 1</strain>
    </source>
</reference>
<keyword id="KW-1003">Cell membrane</keyword>
<keyword id="KW-0472">Membrane</keyword>
<keyword id="KW-1185">Reference proteome</keyword>
<keyword id="KW-0812">Transmembrane</keyword>
<keyword id="KW-1133">Transmembrane helix</keyword>
<accession>P75387</accession>
<protein>
    <recommendedName>
        <fullName>Uncharacterized protein MG277 homolog</fullName>
    </recommendedName>
</protein>
<organism>
    <name type="scientific">Mycoplasma pneumoniae (strain ATCC 29342 / M129 / Subtype 1)</name>
    <name type="common">Mycoplasmoides pneumoniae</name>
    <dbReference type="NCBI Taxonomy" id="272634"/>
    <lineage>
        <taxon>Bacteria</taxon>
        <taxon>Bacillati</taxon>
        <taxon>Mycoplasmatota</taxon>
        <taxon>Mycoplasmoidales</taxon>
        <taxon>Mycoplasmoidaceae</taxon>
        <taxon>Mycoplasmoides</taxon>
    </lineage>
</organism>